<dbReference type="EMBL" id="DQ365982">
    <property type="protein sequence ID" value="ABD24044.1"/>
    <property type="molecule type" value="mRNA"/>
</dbReference>
<dbReference type="SMR" id="Q2ES46"/>
<dbReference type="MEROPS" id="I02.062"/>
<dbReference type="GO" id="GO:0005615">
    <property type="term" value="C:extracellular space"/>
    <property type="evidence" value="ECO:0007669"/>
    <property type="project" value="TreeGrafter"/>
</dbReference>
<dbReference type="GO" id="GO:0004867">
    <property type="term" value="F:serine-type endopeptidase inhibitor activity"/>
    <property type="evidence" value="ECO:0007669"/>
    <property type="project" value="UniProtKB-KW"/>
</dbReference>
<dbReference type="CDD" id="cd22608">
    <property type="entry name" value="Kunitz_PPTI-like"/>
    <property type="match status" value="1"/>
</dbReference>
<dbReference type="FunFam" id="4.10.410.10:FF:000021">
    <property type="entry name" value="Serine protease inhibitor, putative"/>
    <property type="match status" value="1"/>
</dbReference>
<dbReference type="Gene3D" id="4.10.410.10">
    <property type="entry name" value="Pancreatic trypsin inhibitor Kunitz domain"/>
    <property type="match status" value="1"/>
</dbReference>
<dbReference type="InterPro" id="IPR002223">
    <property type="entry name" value="Kunitz_BPTI"/>
</dbReference>
<dbReference type="InterPro" id="IPR036880">
    <property type="entry name" value="Kunitz_BPTI_sf"/>
</dbReference>
<dbReference type="InterPro" id="IPR020901">
    <property type="entry name" value="Prtase_inh_Kunz-CS"/>
</dbReference>
<dbReference type="InterPro" id="IPR050098">
    <property type="entry name" value="TFPI/VKTCI-like"/>
</dbReference>
<dbReference type="PANTHER" id="PTHR10083:SF374">
    <property type="entry name" value="BPTI_KUNITZ INHIBITOR DOMAIN-CONTAINING PROTEIN"/>
    <property type="match status" value="1"/>
</dbReference>
<dbReference type="PANTHER" id="PTHR10083">
    <property type="entry name" value="KUNITZ-TYPE PROTEASE INHIBITOR-RELATED"/>
    <property type="match status" value="1"/>
</dbReference>
<dbReference type="Pfam" id="PF00014">
    <property type="entry name" value="Kunitz_BPTI"/>
    <property type="match status" value="1"/>
</dbReference>
<dbReference type="PRINTS" id="PR00759">
    <property type="entry name" value="BASICPTASE"/>
</dbReference>
<dbReference type="SMART" id="SM00131">
    <property type="entry name" value="KU"/>
    <property type="match status" value="1"/>
</dbReference>
<dbReference type="SUPFAM" id="SSF57362">
    <property type="entry name" value="BPTI-like"/>
    <property type="match status" value="1"/>
</dbReference>
<dbReference type="PROSITE" id="PS00280">
    <property type="entry name" value="BPTI_KUNITZ_1"/>
    <property type="match status" value="1"/>
</dbReference>
<dbReference type="PROSITE" id="PS50279">
    <property type="entry name" value="BPTI_KUNITZ_2"/>
    <property type="match status" value="1"/>
</dbReference>
<comment type="function">
    <text evidence="1">Serine protease inhibitor.</text>
</comment>
<comment type="subcellular location">
    <subcellularLocation>
        <location evidence="1">Secreted</location>
    </subcellularLocation>
</comment>
<comment type="tissue specificity">
    <text>Expressed by the venom gland.</text>
</comment>
<comment type="similarity">
    <text evidence="3">Belongs to the venom Kunitz-type family.</text>
</comment>
<evidence type="ECO:0000250" key="1"/>
<evidence type="ECO:0000255" key="2">
    <source>
        <dbReference type="PROSITE-ProRule" id="PRU00031"/>
    </source>
</evidence>
<evidence type="ECO:0000305" key="3"/>
<keyword id="KW-1015">Disulfide bond</keyword>
<keyword id="KW-0646">Protease inhibitor</keyword>
<keyword id="KW-0873">Pyrrolidone carboxylic acid</keyword>
<keyword id="KW-0964">Secreted</keyword>
<keyword id="KW-0722">Serine protease inhibitor</keyword>
<keyword id="KW-0732">Signal</keyword>
<proteinExistence type="evidence at transcript level"/>
<sequence>MSSGGLLLLLGLLTLWAELTPISGQDRPKFCHLPVDSGICRAHIPRFYYNPASNQCQGFIYGGCEGNANNFETRDQCRHTCGASGKEGPRPRIASN</sequence>
<organism>
    <name type="scientific">Daboia russelii</name>
    <name type="common">Russel's viper</name>
    <name type="synonym">Vipera russelii</name>
    <dbReference type="NCBI Taxonomy" id="8707"/>
    <lineage>
        <taxon>Eukaryota</taxon>
        <taxon>Metazoa</taxon>
        <taxon>Chordata</taxon>
        <taxon>Craniata</taxon>
        <taxon>Vertebrata</taxon>
        <taxon>Euteleostomi</taxon>
        <taxon>Lepidosauria</taxon>
        <taxon>Squamata</taxon>
        <taxon>Bifurcata</taxon>
        <taxon>Unidentata</taxon>
        <taxon>Episquamata</taxon>
        <taxon>Toxicofera</taxon>
        <taxon>Serpentes</taxon>
        <taxon>Colubroidea</taxon>
        <taxon>Viperidae</taxon>
        <taxon>Viperinae</taxon>
        <taxon>Daboia</taxon>
    </lineage>
</organism>
<accession>Q2ES46</accession>
<name>VKT5_DABRR</name>
<reference key="1">
    <citation type="submission" date="2006-01" db="EMBL/GenBank/DDBJ databases">
        <title>A survey of Daboia russelii venom gland transcripts (cDNA): unraveling the venom proteins and peptides.</title>
        <authorList>
            <person name="Madhukumar A.V."/>
            <person name="Reza M.A."/>
            <person name="Gowda T.V."/>
            <person name="Kini R.M."/>
        </authorList>
    </citation>
    <scope>NUCLEOTIDE SEQUENCE [MRNA]</scope>
    <source>
        <tissue>Venom gland</tissue>
    </source>
</reference>
<feature type="signal peptide" evidence="1">
    <location>
        <begin position="1"/>
        <end position="24"/>
    </location>
</feature>
<feature type="chain" id="PRO_0000377466" description="Kunitz-type serine protease inhibitor 5">
    <location>
        <begin position="25"/>
        <end position="96"/>
    </location>
</feature>
<feature type="domain" description="BPTI/Kunitz inhibitor" evidence="2">
    <location>
        <begin position="31"/>
        <end position="81"/>
    </location>
</feature>
<feature type="site" description="Reactive bond for trypsin" evidence="1">
    <location>
        <begin position="41"/>
        <end position="42"/>
    </location>
</feature>
<feature type="modified residue" description="Pyrrolidone carboxylic acid" evidence="1">
    <location>
        <position position="25"/>
    </location>
</feature>
<feature type="disulfide bond" evidence="2">
    <location>
        <begin position="31"/>
        <end position="81"/>
    </location>
</feature>
<feature type="disulfide bond" evidence="2">
    <location>
        <begin position="40"/>
        <end position="64"/>
    </location>
</feature>
<feature type="disulfide bond" evidence="2">
    <location>
        <begin position="56"/>
        <end position="77"/>
    </location>
</feature>
<protein>
    <recommendedName>
        <fullName>Kunitz-type serine protease inhibitor 5</fullName>
    </recommendedName>
    <alternativeName>
        <fullName>Kunitz protease inhibitor 5</fullName>
    </alternativeName>
    <alternativeName>
        <fullName>Kunitz protease inhibitor V</fullName>
    </alternativeName>
</protein>